<name>GATC4_CULQU</name>
<proteinExistence type="inferred from homology"/>
<keyword id="KW-0067">ATP-binding</keyword>
<keyword id="KW-0436">Ligase</keyword>
<keyword id="KW-0496">Mitochondrion</keyword>
<keyword id="KW-0547">Nucleotide-binding</keyword>
<keyword id="KW-0648">Protein biosynthesis</keyword>
<keyword id="KW-1185">Reference proteome</keyword>
<keyword id="KW-0809">Transit peptide</keyword>
<evidence type="ECO:0000255" key="1">
    <source>
        <dbReference type="HAMAP-Rule" id="MF_03149"/>
    </source>
</evidence>
<evidence type="ECO:0000256" key="2">
    <source>
        <dbReference type="SAM" id="MobiDB-lite"/>
    </source>
</evidence>
<accession>B0WGN4</accession>
<comment type="function">
    <text evidence="1">Allows the formation of correctly charged Gln-tRNA(Gln) through the transamidation of misacylated Glu-tRNA(Gln) in the mitochondria. The reaction takes place in the presence of glutamine and ATP through an activated gamma-phospho-Glu-tRNA(Gln).</text>
</comment>
<comment type="catalytic activity">
    <reaction evidence="1">
        <text>L-glutamyl-tRNA(Gln) + L-glutamine + ATP + H2O = L-glutaminyl-tRNA(Gln) + L-glutamate + ADP + phosphate + H(+)</text>
        <dbReference type="Rhea" id="RHEA:17521"/>
        <dbReference type="Rhea" id="RHEA-COMP:9681"/>
        <dbReference type="Rhea" id="RHEA-COMP:9684"/>
        <dbReference type="ChEBI" id="CHEBI:15377"/>
        <dbReference type="ChEBI" id="CHEBI:15378"/>
        <dbReference type="ChEBI" id="CHEBI:29985"/>
        <dbReference type="ChEBI" id="CHEBI:30616"/>
        <dbReference type="ChEBI" id="CHEBI:43474"/>
        <dbReference type="ChEBI" id="CHEBI:58359"/>
        <dbReference type="ChEBI" id="CHEBI:78520"/>
        <dbReference type="ChEBI" id="CHEBI:78521"/>
        <dbReference type="ChEBI" id="CHEBI:456216"/>
    </reaction>
</comment>
<comment type="subunit">
    <text evidence="1">Subunit of the heterotrimeric GatCAB amidotransferase (AdT) complex, composed of A, B and C subunits.</text>
</comment>
<comment type="subcellular location">
    <subcellularLocation>
        <location evidence="1">Mitochondrion</location>
    </subcellularLocation>
</comment>
<comment type="similarity">
    <text evidence="1">Belongs to the GatC family.</text>
</comment>
<dbReference type="EC" id="6.3.5.-" evidence="1"/>
<dbReference type="EMBL" id="DS231928">
    <property type="protein sequence ID" value="EDS27110.1"/>
    <property type="molecule type" value="Genomic_DNA"/>
</dbReference>
<dbReference type="RefSeq" id="XP_001847868.1">
    <property type="nucleotide sequence ID" value="XM_001847816.1"/>
</dbReference>
<dbReference type="SMR" id="B0WGN4"/>
<dbReference type="FunCoup" id="B0WGN4">
    <property type="interactions" value="1123"/>
</dbReference>
<dbReference type="STRING" id="7176.B0WGN4"/>
<dbReference type="EnsemblMetazoa" id="CPIJ006331-RA">
    <property type="protein sequence ID" value="CPIJ006331-PA"/>
    <property type="gene ID" value="CPIJ006331"/>
</dbReference>
<dbReference type="KEGG" id="cqu:CpipJ_CPIJ006331"/>
<dbReference type="VEuPathDB" id="VectorBase:CPIJ006331"/>
<dbReference type="VEuPathDB" id="VectorBase:CQUJHB007471"/>
<dbReference type="eggNOG" id="KOG4247">
    <property type="taxonomic scope" value="Eukaryota"/>
</dbReference>
<dbReference type="HOGENOM" id="CLU_105899_0_1_1"/>
<dbReference type="InParanoid" id="B0WGN4"/>
<dbReference type="OrthoDB" id="5394539at2759"/>
<dbReference type="PhylomeDB" id="B0WGN4"/>
<dbReference type="Proteomes" id="UP000002320">
    <property type="component" value="Unassembled WGS sequence"/>
</dbReference>
<dbReference type="GO" id="GO:0030956">
    <property type="term" value="C:glutamyl-tRNA(Gln) amidotransferase complex"/>
    <property type="evidence" value="ECO:0007669"/>
    <property type="project" value="UniProtKB-UniRule"/>
</dbReference>
<dbReference type="GO" id="GO:0005739">
    <property type="term" value="C:mitochondrion"/>
    <property type="evidence" value="ECO:0007669"/>
    <property type="project" value="UniProtKB-SubCell"/>
</dbReference>
<dbReference type="GO" id="GO:0005524">
    <property type="term" value="F:ATP binding"/>
    <property type="evidence" value="ECO:0007669"/>
    <property type="project" value="UniProtKB-KW"/>
</dbReference>
<dbReference type="GO" id="GO:0050567">
    <property type="term" value="F:glutaminyl-tRNA synthase (glutamine-hydrolyzing) activity"/>
    <property type="evidence" value="ECO:0007669"/>
    <property type="project" value="UniProtKB-UniRule"/>
</dbReference>
<dbReference type="GO" id="GO:0070681">
    <property type="term" value="P:glutaminyl-tRNAGln biosynthesis via transamidation"/>
    <property type="evidence" value="ECO:0007669"/>
    <property type="project" value="UniProtKB-UniRule"/>
</dbReference>
<dbReference type="GO" id="GO:0032543">
    <property type="term" value="P:mitochondrial translation"/>
    <property type="evidence" value="ECO:0007669"/>
    <property type="project" value="UniProtKB-UniRule"/>
</dbReference>
<dbReference type="GO" id="GO:0006450">
    <property type="term" value="P:regulation of translational fidelity"/>
    <property type="evidence" value="ECO:0007669"/>
    <property type="project" value="InterPro"/>
</dbReference>
<dbReference type="HAMAP" id="MF_00122">
    <property type="entry name" value="GatC"/>
    <property type="match status" value="1"/>
</dbReference>
<dbReference type="InterPro" id="IPR036113">
    <property type="entry name" value="Asp/Glu-ADT_sf_sub_c"/>
</dbReference>
<dbReference type="InterPro" id="IPR003837">
    <property type="entry name" value="GatC"/>
</dbReference>
<dbReference type="PANTHER" id="PTHR15004">
    <property type="entry name" value="GLUTAMYL-TRNA(GLN) AMIDOTRANSFERASE SUBUNIT C, MITOCHONDRIAL"/>
    <property type="match status" value="1"/>
</dbReference>
<dbReference type="PANTHER" id="PTHR15004:SF0">
    <property type="entry name" value="GLUTAMYL-TRNA(GLN) AMIDOTRANSFERASE SUBUNIT C, MITOCHONDRIAL"/>
    <property type="match status" value="1"/>
</dbReference>
<dbReference type="Pfam" id="PF02686">
    <property type="entry name" value="GatC"/>
    <property type="match status" value="1"/>
</dbReference>
<dbReference type="SUPFAM" id="SSF141000">
    <property type="entry name" value="Glu-tRNAGln amidotransferase C subunit"/>
    <property type="match status" value="1"/>
</dbReference>
<sequence>MIRIPFHLRQTPGRTLHSLVRSFASTKPADLSGTQEKSTRQKINFHELKHPSKVPQRPHKSTIDGQSTPTRIPVDAQKGQLLERLSLVDLDSAEAHRTLEDAIEFASQILSVDTDDVEPLYTVLERERLTLREDRVSDGNIQQDVLRNARVTEEENFVAPPENIPLEQEPRK</sequence>
<organism>
    <name type="scientific">Culex quinquefasciatus</name>
    <name type="common">Southern house mosquito</name>
    <name type="synonym">Culex pungens</name>
    <dbReference type="NCBI Taxonomy" id="7176"/>
    <lineage>
        <taxon>Eukaryota</taxon>
        <taxon>Metazoa</taxon>
        <taxon>Ecdysozoa</taxon>
        <taxon>Arthropoda</taxon>
        <taxon>Hexapoda</taxon>
        <taxon>Insecta</taxon>
        <taxon>Pterygota</taxon>
        <taxon>Neoptera</taxon>
        <taxon>Endopterygota</taxon>
        <taxon>Diptera</taxon>
        <taxon>Nematocera</taxon>
        <taxon>Culicoidea</taxon>
        <taxon>Culicidae</taxon>
        <taxon>Culicinae</taxon>
        <taxon>Culicini</taxon>
        <taxon>Culex</taxon>
        <taxon>Culex</taxon>
    </lineage>
</organism>
<reference key="1">
    <citation type="submission" date="2007-03" db="EMBL/GenBank/DDBJ databases">
        <title>Annotation of Culex pipiens quinquefasciatus.</title>
        <authorList>
            <consortium name="The Broad Institute Genome Sequencing Platform"/>
            <person name="Atkinson P.W."/>
            <person name="Hemingway J."/>
            <person name="Christensen B.M."/>
            <person name="Higgs S."/>
            <person name="Kodira C.D."/>
            <person name="Hannick L.I."/>
            <person name="Megy K."/>
            <person name="O'Leary S.B."/>
            <person name="Pearson M."/>
            <person name="Haas B.J."/>
            <person name="Mauceli E."/>
            <person name="Wortman J.R."/>
            <person name="Lee N.H."/>
            <person name="Guigo R."/>
            <person name="Stanke M."/>
            <person name="Alvarado L."/>
            <person name="Amedeo P."/>
            <person name="Antoine C.H."/>
            <person name="Arensburger P."/>
            <person name="Bidwell S.L."/>
            <person name="Crawford M."/>
            <person name="Camaro F."/>
            <person name="Devon K."/>
            <person name="Engels R."/>
            <person name="Hammond M."/>
            <person name="Howarth C."/>
            <person name="Koehrsen M."/>
            <person name="Lawson D."/>
            <person name="Montgomery P."/>
            <person name="Nene V."/>
            <person name="Nusbaum C."/>
            <person name="Puiu D."/>
            <person name="Romero-Severson J."/>
            <person name="Severson D.W."/>
            <person name="Shumway M."/>
            <person name="Sisk P."/>
            <person name="Stolte C."/>
            <person name="Zeng Q."/>
            <person name="Eisenstadt E."/>
            <person name="Fraser-Liggett C.M."/>
            <person name="Strausberg R."/>
            <person name="Galagan J."/>
            <person name="Birren B."/>
            <person name="Collins F.H."/>
        </authorList>
    </citation>
    <scope>NUCLEOTIDE SEQUENCE [LARGE SCALE GENOMIC DNA]</scope>
    <source>
        <strain>JHB</strain>
    </source>
</reference>
<protein>
    <recommendedName>
        <fullName>Glutamyl-tRNA(Gln) amidotransferase subunit C-4, mitochondrial</fullName>
        <shortName evidence="1">Glu-AdT subunit C-4</shortName>
        <ecNumber evidence="1">6.3.5.-</ecNumber>
    </recommendedName>
</protein>
<feature type="transit peptide" description="Mitochondrion" evidence="1">
    <location>
        <begin position="1"/>
        <end position="23"/>
    </location>
</feature>
<feature type="chain" id="PRO_0000413300" description="Glutamyl-tRNA(Gln) amidotransferase subunit C-4, mitochondrial">
    <location>
        <begin position="24"/>
        <end position="172"/>
    </location>
</feature>
<feature type="region of interest" description="Disordered" evidence="2">
    <location>
        <begin position="51"/>
        <end position="73"/>
    </location>
</feature>
<gene>
    <name type="ORF">CPIJ006331</name>
</gene>